<name>RS13_SHIDS</name>
<gene>
    <name evidence="1" type="primary">rpsM</name>
    <name type="ordered locus">SDY_3474</name>
</gene>
<dbReference type="EMBL" id="CP000034">
    <property type="protein sequence ID" value="ABB63452.1"/>
    <property type="molecule type" value="Genomic_DNA"/>
</dbReference>
<dbReference type="RefSeq" id="WP_000090775.1">
    <property type="nucleotide sequence ID" value="NC_007606.1"/>
</dbReference>
<dbReference type="RefSeq" id="YP_404943.1">
    <property type="nucleotide sequence ID" value="NC_007606.1"/>
</dbReference>
<dbReference type="SMR" id="Q32B53"/>
<dbReference type="STRING" id="300267.SDY_3474"/>
<dbReference type="EnsemblBacteria" id="ABB63452">
    <property type="protein sequence ID" value="ABB63452"/>
    <property type="gene ID" value="SDY_3474"/>
</dbReference>
<dbReference type="GeneID" id="93778689"/>
<dbReference type="KEGG" id="sdy:SDY_3474"/>
<dbReference type="PATRIC" id="fig|300267.13.peg.4127"/>
<dbReference type="HOGENOM" id="CLU_103849_1_2_6"/>
<dbReference type="Proteomes" id="UP000002716">
    <property type="component" value="Chromosome"/>
</dbReference>
<dbReference type="GO" id="GO:0005829">
    <property type="term" value="C:cytosol"/>
    <property type="evidence" value="ECO:0007669"/>
    <property type="project" value="TreeGrafter"/>
</dbReference>
<dbReference type="GO" id="GO:0015935">
    <property type="term" value="C:small ribosomal subunit"/>
    <property type="evidence" value="ECO:0007669"/>
    <property type="project" value="TreeGrafter"/>
</dbReference>
<dbReference type="GO" id="GO:0019843">
    <property type="term" value="F:rRNA binding"/>
    <property type="evidence" value="ECO:0007669"/>
    <property type="project" value="UniProtKB-UniRule"/>
</dbReference>
<dbReference type="GO" id="GO:0003735">
    <property type="term" value="F:structural constituent of ribosome"/>
    <property type="evidence" value="ECO:0007669"/>
    <property type="project" value="InterPro"/>
</dbReference>
<dbReference type="GO" id="GO:0000049">
    <property type="term" value="F:tRNA binding"/>
    <property type="evidence" value="ECO:0007669"/>
    <property type="project" value="UniProtKB-UniRule"/>
</dbReference>
<dbReference type="GO" id="GO:0006412">
    <property type="term" value="P:translation"/>
    <property type="evidence" value="ECO:0007669"/>
    <property type="project" value="UniProtKB-UniRule"/>
</dbReference>
<dbReference type="FunFam" id="1.10.8.50:FF:000001">
    <property type="entry name" value="30S ribosomal protein S13"/>
    <property type="match status" value="1"/>
</dbReference>
<dbReference type="FunFam" id="4.10.910.10:FF:000001">
    <property type="entry name" value="30S ribosomal protein S13"/>
    <property type="match status" value="1"/>
</dbReference>
<dbReference type="Gene3D" id="1.10.8.50">
    <property type="match status" value="1"/>
</dbReference>
<dbReference type="Gene3D" id="4.10.910.10">
    <property type="entry name" value="30s ribosomal protein s13, domain 2"/>
    <property type="match status" value="1"/>
</dbReference>
<dbReference type="HAMAP" id="MF_01315">
    <property type="entry name" value="Ribosomal_uS13"/>
    <property type="match status" value="1"/>
</dbReference>
<dbReference type="InterPro" id="IPR027437">
    <property type="entry name" value="Rbsml_uS13_C"/>
</dbReference>
<dbReference type="InterPro" id="IPR001892">
    <property type="entry name" value="Ribosomal_uS13"/>
</dbReference>
<dbReference type="InterPro" id="IPR010979">
    <property type="entry name" value="Ribosomal_uS13-like_H2TH"/>
</dbReference>
<dbReference type="InterPro" id="IPR019980">
    <property type="entry name" value="Ribosomal_uS13_bac-type"/>
</dbReference>
<dbReference type="InterPro" id="IPR018269">
    <property type="entry name" value="Ribosomal_uS13_CS"/>
</dbReference>
<dbReference type="NCBIfam" id="TIGR03631">
    <property type="entry name" value="uS13_bact"/>
    <property type="match status" value="1"/>
</dbReference>
<dbReference type="PANTHER" id="PTHR10871">
    <property type="entry name" value="30S RIBOSOMAL PROTEIN S13/40S RIBOSOMAL PROTEIN S18"/>
    <property type="match status" value="1"/>
</dbReference>
<dbReference type="PANTHER" id="PTHR10871:SF1">
    <property type="entry name" value="SMALL RIBOSOMAL SUBUNIT PROTEIN US13M"/>
    <property type="match status" value="1"/>
</dbReference>
<dbReference type="Pfam" id="PF00416">
    <property type="entry name" value="Ribosomal_S13"/>
    <property type="match status" value="1"/>
</dbReference>
<dbReference type="PIRSF" id="PIRSF002134">
    <property type="entry name" value="Ribosomal_S13"/>
    <property type="match status" value="1"/>
</dbReference>
<dbReference type="SUPFAM" id="SSF46946">
    <property type="entry name" value="S13-like H2TH domain"/>
    <property type="match status" value="1"/>
</dbReference>
<dbReference type="PROSITE" id="PS00646">
    <property type="entry name" value="RIBOSOMAL_S13_1"/>
    <property type="match status" value="1"/>
</dbReference>
<dbReference type="PROSITE" id="PS50159">
    <property type="entry name" value="RIBOSOMAL_S13_2"/>
    <property type="match status" value="1"/>
</dbReference>
<reference key="1">
    <citation type="journal article" date="2005" name="Nucleic Acids Res.">
        <title>Genome dynamics and diversity of Shigella species, the etiologic agents of bacillary dysentery.</title>
        <authorList>
            <person name="Yang F."/>
            <person name="Yang J."/>
            <person name="Zhang X."/>
            <person name="Chen L."/>
            <person name="Jiang Y."/>
            <person name="Yan Y."/>
            <person name="Tang X."/>
            <person name="Wang J."/>
            <person name="Xiong Z."/>
            <person name="Dong J."/>
            <person name="Xue Y."/>
            <person name="Zhu Y."/>
            <person name="Xu X."/>
            <person name="Sun L."/>
            <person name="Chen S."/>
            <person name="Nie H."/>
            <person name="Peng J."/>
            <person name="Xu J."/>
            <person name="Wang Y."/>
            <person name="Yuan Z."/>
            <person name="Wen Y."/>
            <person name="Yao Z."/>
            <person name="Shen Y."/>
            <person name="Qiang B."/>
            <person name="Hou Y."/>
            <person name="Yu J."/>
            <person name="Jin Q."/>
        </authorList>
    </citation>
    <scope>NUCLEOTIDE SEQUENCE [LARGE SCALE GENOMIC DNA]</scope>
    <source>
        <strain>Sd197</strain>
    </source>
</reference>
<keyword id="KW-1185">Reference proteome</keyword>
<keyword id="KW-0687">Ribonucleoprotein</keyword>
<keyword id="KW-0689">Ribosomal protein</keyword>
<keyword id="KW-0694">RNA-binding</keyword>
<keyword id="KW-0699">rRNA-binding</keyword>
<keyword id="KW-0820">tRNA-binding</keyword>
<organism>
    <name type="scientific">Shigella dysenteriae serotype 1 (strain Sd197)</name>
    <dbReference type="NCBI Taxonomy" id="300267"/>
    <lineage>
        <taxon>Bacteria</taxon>
        <taxon>Pseudomonadati</taxon>
        <taxon>Pseudomonadota</taxon>
        <taxon>Gammaproteobacteria</taxon>
        <taxon>Enterobacterales</taxon>
        <taxon>Enterobacteriaceae</taxon>
        <taxon>Shigella</taxon>
    </lineage>
</organism>
<accession>Q32B53</accession>
<proteinExistence type="inferred from homology"/>
<evidence type="ECO:0000255" key="1">
    <source>
        <dbReference type="HAMAP-Rule" id="MF_01315"/>
    </source>
</evidence>
<evidence type="ECO:0000256" key="2">
    <source>
        <dbReference type="SAM" id="MobiDB-lite"/>
    </source>
</evidence>
<evidence type="ECO:0000305" key="3"/>
<sequence>MARIAGINIPDHKHAVIALTSIYGVGKTRSKAILAAAGIAEDVKISELSEGQIDTLRDEVAKFVVEGDLRREISMSIKRLMDLGCYRGLRHRRGLPVRGQRTKTNARTRKGPRKPIKK</sequence>
<feature type="chain" id="PRO_0000230564" description="Small ribosomal subunit protein uS13">
    <location>
        <begin position="1"/>
        <end position="118"/>
    </location>
</feature>
<feature type="region of interest" description="Disordered" evidence="2">
    <location>
        <begin position="94"/>
        <end position="118"/>
    </location>
</feature>
<comment type="function">
    <text evidence="1">Located at the top of the head of the 30S subunit, it contacts several helices of the 16S rRNA. In the 70S ribosome it contacts the 23S rRNA (bridge B1a) and protein L5 of the 50S subunit (bridge B1b), connecting the 2 subunits; these bridges are implicated in subunit movement. Contacts the tRNAs in the A and P-sites.</text>
</comment>
<comment type="subunit">
    <text evidence="1">Part of the 30S ribosomal subunit. Forms a loose heterodimer with protein S19. Forms two bridges to the 50S subunit in the 70S ribosome.</text>
</comment>
<comment type="similarity">
    <text evidence="1">Belongs to the universal ribosomal protein uS13 family.</text>
</comment>
<protein>
    <recommendedName>
        <fullName evidence="1">Small ribosomal subunit protein uS13</fullName>
    </recommendedName>
    <alternativeName>
        <fullName evidence="3">30S ribosomal protein S13</fullName>
    </alternativeName>
</protein>